<reference key="1">
    <citation type="journal article" date="2005" name="Genome Res.">
        <title>Comparative and functional genomic analyses of the pathogenicity of phytopathogen Xanthomonas campestris pv. campestris.</title>
        <authorList>
            <person name="Qian W."/>
            <person name="Jia Y."/>
            <person name="Ren S.-X."/>
            <person name="He Y.-Q."/>
            <person name="Feng J.-X."/>
            <person name="Lu L.-F."/>
            <person name="Sun Q."/>
            <person name="Ying G."/>
            <person name="Tang D.-J."/>
            <person name="Tang H."/>
            <person name="Wu W."/>
            <person name="Hao P."/>
            <person name="Wang L."/>
            <person name="Jiang B.-L."/>
            <person name="Zeng S."/>
            <person name="Gu W.-Y."/>
            <person name="Lu G."/>
            <person name="Rong L."/>
            <person name="Tian Y."/>
            <person name="Yao Z."/>
            <person name="Fu G."/>
            <person name="Chen B."/>
            <person name="Fang R."/>
            <person name="Qiang B."/>
            <person name="Chen Z."/>
            <person name="Zhao G.-P."/>
            <person name="Tang J.-L."/>
            <person name="He C."/>
        </authorList>
    </citation>
    <scope>NUCLEOTIDE SEQUENCE [LARGE SCALE GENOMIC DNA]</scope>
    <source>
        <strain>8004</strain>
    </source>
</reference>
<proteinExistence type="inferred from homology"/>
<gene>
    <name evidence="1" type="primary">glgB1</name>
    <name type="ordered locus">XC_0143</name>
</gene>
<comment type="function">
    <text evidence="1">Catalyzes the formation of the alpha-1,6-glucosidic linkages in glycogen by scission of a 1,4-alpha-linked oligosaccharide from growing alpha-1,4-glucan chains and the subsequent attachment of the oligosaccharide to the alpha-1,6 position.</text>
</comment>
<comment type="catalytic activity">
    <reaction evidence="1">
        <text>Transfers a segment of a (1-&gt;4)-alpha-D-glucan chain to a primary hydroxy group in a similar glucan chain.</text>
        <dbReference type="EC" id="2.4.1.18"/>
    </reaction>
</comment>
<comment type="pathway">
    <text evidence="1">Glycan biosynthesis; glycogen biosynthesis.</text>
</comment>
<comment type="subunit">
    <text evidence="1">Monomer.</text>
</comment>
<comment type="similarity">
    <text evidence="1">Belongs to the glycosyl hydrolase 13 family. GlgB subfamily.</text>
</comment>
<keyword id="KW-0119">Carbohydrate metabolism</keyword>
<keyword id="KW-0320">Glycogen biosynthesis</keyword>
<keyword id="KW-0321">Glycogen metabolism</keyword>
<keyword id="KW-0328">Glycosyltransferase</keyword>
<keyword id="KW-0808">Transferase</keyword>
<protein>
    <recommendedName>
        <fullName evidence="1">1,4-alpha-glucan branching enzyme GlgB 1</fullName>
        <ecNumber evidence="1">2.4.1.18</ecNumber>
    </recommendedName>
    <alternativeName>
        <fullName evidence="1">1,4-alpha-D-glucan:1,4-alpha-D-glucan 6-glucosyl-transferase 1</fullName>
    </alternativeName>
    <alternativeName>
        <fullName evidence="1">Alpha-(1-&gt;4)-glucan branching enzyme 1</fullName>
    </alternativeName>
    <alternativeName>
        <fullName evidence="1">Glycogen branching enzyme 1</fullName>
        <shortName evidence="1">BE 1</shortName>
    </alternativeName>
</protein>
<organism>
    <name type="scientific">Xanthomonas campestris pv. campestris (strain 8004)</name>
    <dbReference type="NCBI Taxonomy" id="314565"/>
    <lineage>
        <taxon>Bacteria</taxon>
        <taxon>Pseudomonadati</taxon>
        <taxon>Pseudomonadota</taxon>
        <taxon>Gammaproteobacteria</taxon>
        <taxon>Lysobacterales</taxon>
        <taxon>Lysobacteraceae</taxon>
        <taxon>Xanthomonas</taxon>
    </lineage>
</organism>
<sequence>MTNRWDPGVTRALAEARHGDAFAVLGAHPSTNGRLLRTYHPGAEHVTAVLADGREVPLEAGPEPGLFAGELPAEGRYRLRIGWPGGTQDTADPYAFGPLLSDFDLHLISEGHHLQLADALGANAVEVDGVRGTRFAVWAPNASRVAVVGDFNSWDARRHPMRLRHQAGVWELFVPDVGPGAHYKYQLRGPHGHELPAKADPVARRAELAPGTASIVADPTPHQWSDDGWMATRARRQAHDAPMSIYEIHAGSWLREEGLDLDWDGLADRLIPYVADMGFTHVELMPVTEHPFGGSWGYQPLGLFAPTARFGSPDGFARFVDRCHREGIGVIVDWVPAHFPTDAHGLAHFDGTALYEHADPREGFHRDWNTLIYNHGRREVSGFLIASALEFLQRYHVDGLRVDAVASMLYRDYSRNAGEWVPNIHGGRENYETIAFLRRLNEVVREHAPGAVTIAEESTAWPGVTADVSHGGLGFHYKWNMGWMHDTLHYIGLDPIYRRYHHGELTFSMVYAYSERFVLPISHDEVVHGKGSLLGRMPGDDWQRFANLRAYLGFMFTHPGRKLLFMGCEFGQPTEWNHDAGLPWHLLDDARHRGVQTLVRDLNHLYAQYPALHAHDDDPSGFAWLVGDDAANSVVAFLRKGKRGDAPVLVVINYTPVVQQGYRLGVPQGGLWREVFNSDAGIYGGANLGNGGAVTAEPQSMHGHAQSLPLLLPPLGVIVLAPQG</sequence>
<evidence type="ECO:0000255" key="1">
    <source>
        <dbReference type="HAMAP-Rule" id="MF_00685"/>
    </source>
</evidence>
<accession>Q4V0E2</accession>
<feature type="chain" id="PRO_0000260714" description="1,4-alpha-glucan branching enzyme GlgB 1">
    <location>
        <begin position="1"/>
        <end position="724"/>
    </location>
</feature>
<feature type="active site" description="Nucleophile" evidence="1">
    <location>
        <position position="403"/>
    </location>
</feature>
<feature type="active site" description="Proton donor" evidence="1">
    <location>
        <position position="456"/>
    </location>
</feature>
<name>GLGB1_XANC8</name>
<dbReference type="EC" id="2.4.1.18" evidence="1"/>
<dbReference type="EMBL" id="CP000050">
    <property type="protein sequence ID" value="AAY47231.1"/>
    <property type="molecule type" value="Genomic_DNA"/>
</dbReference>
<dbReference type="SMR" id="Q4V0E2"/>
<dbReference type="CAZy" id="CBM48">
    <property type="family name" value="Carbohydrate-Binding Module Family 48"/>
</dbReference>
<dbReference type="CAZy" id="GH13">
    <property type="family name" value="Glycoside Hydrolase Family 13"/>
</dbReference>
<dbReference type="KEGG" id="xcb:XC_0143"/>
<dbReference type="HOGENOM" id="CLU_004245_3_2_6"/>
<dbReference type="UniPathway" id="UPA00164"/>
<dbReference type="Proteomes" id="UP000000420">
    <property type="component" value="Chromosome"/>
</dbReference>
<dbReference type="GO" id="GO:0005829">
    <property type="term" value="C:cytosol"/>
    <property type="evidence" value="ECO:0007669"/>
    <property type="project" value="TreeGrafter"/>
</dbReference>
<dbReference type="GO" id="GO:0003844">
    <property type="term" value="F:1,4-alpha-glucan branching enzyme activity"/>
    <property type="evidence" value="ECO:0007669"/>
    <property type="project" value="UniProtKB-UniRule"/>
</dbReference>
<dbReference type="GO" id="GO:0043169">
    <property type="term" value="F:cation binding"/>
    <property type="evidence" value="ECO:0007669"/>
    <property type="project" value="InterPro"/>
</dbReference>
<dbReference type="GO" id="GO:0004553">
    <property type="term" value="F:hydrolase activity, hydrolyzing O-glycosyl compounds"/>
    <property type="evidence" value="ECO:0007669"/>
    <property type="project" value="InterPro"/>
</dbReference>
<dbReference type="GO" id="GO:0005978">
    <property type="term" value="P:glycogen biosynthetic process"/>
    <property type="evidence" value="ECO:0007669"/>
    <property type="project" value="UniProtKB-UniRule"/>
</dbReference>
<dbReference type="CDD" id="cd11322">
    <property type="entry name" value="AmyAc_Glg_BE"/>
    <property type="match status" value="1"/>
</dbReference>
<dbReference type="CDD" id="cd02855">
    <property type="entry name" value="E_set_GBE_prok_N"/>
    <property type="match status" value="1"/>
</dbReference>
<dbReference type="FunFam" id="2.60.40.10:FF:000169">
    <property type="entry name" value="1,4-alpha-glucan branching enzyme GlgB"/>
    <property type="match status" value="1"/>
</dbReference>
<dbReference type="FunFam" id="2.60.40.1180:FF:000002">
    <property type="entry name" value="1,4-alpha-glucan branching enzyme GlgB"/>
    <property type="match status" value="1"/>
</dbReference>
<dbReference type="FunFam" id="3.20.20.80:FF:000003">
    <property type="entry name" value="1,4-alpha-glucan branching enzyme GlgB"/>
    <property type="match status" value="1"/>
</dbReference>
<dbReference type="Gene3D" id="3.20.20.80">
    <property type="entry name" value="Glycosidases"/>
    <property type="match status" value="1"/>
</dbReference>
<dbReference type="Gene3D" id="2.60.40.1180">
    <property type="entry name" value="Golgi alpha-mannosidase II"/>
    <property type="match status" value="1"/>
</dbReference>
<dbReference type="Gene3D" id="2.60.40.10">
    <property type="entry name" value="Immunoglobulins"/>
    <property type="match status" value="2"/>
</dbReference>
<dbReference type="HAMAP" id="MF_00685">
    <property type="entry name" value="GlgB"/>
    <property type="match status" value="1"/>
</dbReference>
<dbReference type="InterPro" id="IPR006048">
    <property type="entry name" value="A-amylase/branching_C"/>
</dbReference>
<dbReference type="InterPro" id="IPR037439">
    <property type="entry name" value="Branching_enzy"/>
</dbReference>
<dbReference type="InterPro" id="IPR006407">
    <property type="entry name" value="GlgB"/>
</dbReference>
<dbReference type="InterPro" id="IPR054169">
    <property type="entry name" value="GlgB_N"/>
</dbReference>
<dbReference type="InterPro" id="IPR044143">
    <property type="entry name" value="GlgB_N_E_set_prok"/>
</dbReference>
<dbReference type="InterPro" id="IPR006047">
    <property type="entry name" value="Glyco_hydro_13_cat_dom"/>
</dbReference>
<dbReference type="InterPro" id="IPR004193">
    <property type="entry name" value="Glyco_hydro_13_N"/>
</dbReference>
<dbReference type="InterPro" id="IPR013780">
    <property type="entry name" value="Glyco_hydro_b"/>
</dbReference>
<dbReference type="InterPro" id="IPR017853">
    <property type="entry name" value="Glycoside_hydrolase_SF"/>
</dbReference>
<dbReference type="InterPro" id="IPR013783">
    <property type="entry name" value="Ig-like_fold"/>
</dbReference>
<dbReference type="InterPro" id="IPR014756">
    <property type="entry name" value="Ig_E-set"/>
</dbReference>
<dbReference type="NCBIfam" id="TIGR01515">
    <property type="entry name" value="branching_enzym"/>
    <property type="match status" value="1"/>
</dbReference>
<dbReference type="NCBIfam" id="NF003811">
    <property type="entry name" value="PRK05402.1"/>
    <property type="match status" value="1"/>
</dbReference>
<dbReference type="NCBIfam" id="NF008967">
    <property type="entry name" value="PRK12313.1"/>
    <property type="match status" value="1"/>
</dbReference>
<dbReference type="PANTHER" id="PTHR43651">
    <property type="entry name" value="1,4-ALPHA-GLUCAN-BRANCHING ENZYME"/>
    <property type="match status" value="1"/>
</dbReference>
<dbReference type="PANTHER" id="PTHR43651:SF3">
    <property type="entry name" value="1,4-ALPHA-GLUCAN-BRANCHING ENZYME"/>
    <property type="match status" value="1"/>
</dbReference>
<dbReference type="Pfam" id="PF00128">
    <property type="entry name" value="Alpha-amylase"/>
    <property type="match status" value="1"/>
</dbReference>
<dbReference type="Pfam" id="PF02806">
    <property type="entry name" value="Alpha-amylase_C"/>
    <property type="match status" value="1"/>
</dbReference>
<dbReference type="Pfam" id="PF02922">
    <property type="entry name" value="CBM_48"/>
    <property type="match status" value="1"/>
</dbReference>
<dbReference type="Pfam" id="PF22019">
    <property type="entry name" value="GlgB_N"/>
    <property type="match status" value="1"/>
</dbReference>
<dbReference type="PIRSF" id="PIRSF000463">
    <property type="entry name" value="GlgB"/>
    <property type="match status" value="1"/>
</dbReference>
<dbReference type="SMART" id="SM00642">
    <property type="entry name" value="Aamy"/>
    <property type="match status" value="1"/>
</dbReference>
<dbReference type="SUPFAM" id="SSF51445">
    <property type="entry name" value="(Trans)glycosidases"/>
    <property type="match status" value="1"/>
</dbReference>
<dbReference type="SUPFAM" id="SSF81296">
    <property type="entry name" value="E set domains"/>
    <property type="match status" value="1"/>
</dbReference>
<dbReference type="SUPFAM" id="SSF51011">
    <property type="entry name" value="Glycosyl hydrolase domain"/>
    <property type="match status" value="1"/>
</dbReference>